<organism>
    <name type="scientific">Pectobacterium atrosepticum (strain SCRI 1043 / ATCC BAA-672)</name>
    <name type="common">Erwinia carotovora subsp. atroseptica</name>
    <dbReference type="NCBI Taxonomy" id="218491"/>
    <lineage>
        <taxon>Bacteria</taxon>
        <taxon>Pseudomonadati</taxon>
        <taxon>Pseudomonadota</taxon>
        <taxon>Gammaproteobacteria</taxon>
        <taxon>Enterobacterales</taxon>
        <taxon>Pectobacteriaceae</taxon>
        <taxon>Pectobacterium</taxon>
    </lineage>
</organism>
<proteinExistence type="inferred from homology"/>
<name>GSH1_PECAS</name>
<evidence type="ECO:0000255" key="1">
    <source>
        <dbReference type="HAMAP-Rule" id="MF_00578"/>
    </source>
</evidence>
<comment type="catalytic activity">
    <reaction evidence="1">
        <text>L-cysteine + L-glutamate + ATP = gamma-L-glutamyl-L-cysteine + ADP + phosphate + H(+)</text>
        <dbReference type="Rhea" id="RHEA:13285"/>
        <dbReference type="ChEBI" id="CHEBI:15378"/>
        <dbReference type="ChEBI" id="CHEBI:29985"/>
        <dbReference type="ChEBI" id="CHEBI:30616"/>
        <dbReference type="ChEBI" id="CHEBI:35235"/>
        <dbReference type="ChEBI" id="CHEBI:43474"/>
        <dbReference type="ChEBI" id="CHEBI:58173"/>
        <dbReference type="ChEBI" id="CHEBI:456216"/>
        <dbReference type="EC" id="6.3.2.2"/>
    </reaction>
</comment>
<comment type="pathway">
    <text evidence="1">Sulfur metabolism; glutathione biosynthesis; glutathione from L-cysteine and L-glutamate: step 1/2.</text>
</comment>
<comment type="similarity">
    <text evidence="1">Belongs to the glutamate--cysteine ligase type 1 family. Type 1 subfamily.</text>
</comment>
<protein>
    <recommendedName>
        <fullName evidence="1">Glutamate--cysteine ligase</fullName>
        <ecNumber evidence="1">6.3.2.2</ecNumber>
    </recommendedName>
    <alternativeName>
        <fullName evidence="1">Gamma-ECS</fullName>
        <shortName evidence="1">GCS</shortName>
    </alternativeName>
    <alternativeName>
        <fullName evidence="1">Gamma-glutamylcysteine synthetase</fullName>
    </alternativeName>
</protein>
<dbReference type="EC" id="6.3.2.2" evidence="1"/>
<dbReference type="EMBL" id="BX950851">
    <property type="protein sequence ID" value="CAG76261.1"/>
    <property type="molecule type" value="Genomic_DNA"/>
</dbReference>
<dbReference type="RefSeq" id="WP_011094876.1">
    <property type="nucleotide sequence ID" value="NC_004547.2"/>
</dbReference>
<dbReference type="SMR" id="Q6D1T4"/>
<dbReference type="STRING" id="218491.ECA3363"/>
<dbReference type="KEGG" id="eca:ECA3363"/>
<dbReference type="PATRIC" id="fig|218491.5.peg.3415"/>
<dbReference type="eggNOG" id="COG2918">
    <property type="taxonomic scope" value="Bacteria"/>
</dbReference>
<dbReference type="HOGENOM" id="CLU_020728_3_0_6"/>
<dbReference type="OrthoDB" id="9803907at2"/>
<dbReference type="UniPathway" id="UPA00142">
    <property type="reaction ID" value="UER00209"/>
</dbReference>
<dbReference type="Proteomes" id="UP000007966">
    <property type="component" value="Chromosome"/>
</dbReference>
<dbReference type="GO" id="GO:0005829">
    <property type="term" value="C:cytosol"/>
    <property type="evidence" value="ECO:0007669"/>
    <property type="project" value="TreeGrafter"/>
</dbReference>
<dbReference type="GO" id="GO:0005524">
    <property type="term" value="F:ATP binding"/>
    <property type="evidence" value="ECO:0007669"/>
    <property type="project" value="UniProtKB-KW"/>
</dbReference>
<dbReference type="GO" id="GO:0004357">
    <property type="term" value="F:glutamate-cysteine ligase activity"/>
    <property type="evidence" value="ECO:0007669"/>
    <property type="project" value="UniProtKB-UniRule"/>
</dbReference>
<dbReference type="GO" id="GO:0046872">
    <property type="term" value="F:metal ion binding"/>
    <property type="evidence" value="ECO:0007669"/>
    <property type="project" value="TreeGrafter"/>
</dbReference>
<dbReference type="GO" id="GO:0006750">
    <property type="term" value="P:glutathione biosynthetic process"/>
    <property type="evidence" value="ECO:0007669"/>
    <property type="project" value="UniProtKB-UniRule"/>
</dbReference>
<dbReference type="FunFam" id="3.30.590.20:FF:000001">
    <property type="entry name" value="Glutamate--cysteine ligase"/>
    <property type="match status" value="1"/>
</dbReference>
<dbReference type="Gene3D" id="3.30.590.20">
    <property type="match status" value="1"/>
</dbReference>
<dbReference type="HAMAP" id="MF_00578">
    <property type="entry name" value="Glu_cys_ligase"/>
    <property type="match status" value="1"/>
</dbReference>
<dbReference type="InterPro" id="IPR014746">
    <property type="entry name" value="Gln_synth/guanido_kin_cat_dom"/>
</dbReference>
<dbReference type="InterPro" id="IPR007370">
    <property type="entry name" value="Glu_cys_ligase"/>
</dbReference>
<dbReference type="InterPro" id="IPR006334">
    <property type="entry name" value="Glut_cys_ligase"/>
</dbReference>
<dbReference type="NCBIfam" id="TIGR01434">
    <property type="entry name" value="glu_cys_ligase"/>
    <property type="match status" value="1"/>
</dbReference>
<dbReference type="PANTHER" id="PTHR38761">
    <property type="entry name" value="GLUTAMATE--CYSTEINE LIGASE"/>
    <property type="match status" value="1"/>
</dbReference>
<dbReference type="PANTHER" id="PTHR38761:SF1">
    <property type="entry name" value="GLUTAMATE--CYSTEINE LIGASE"/>
    <property type="match status" value="1"/>
</dbReference>
<dbReference type="Pfam" id="PF04262">
    <property type="entry name" value="Glu_cys_ligase"/>
    <property type="match status" value="1"/>
</dbReference>
<dbReference type="SUPFAM" id="SSF55931">
    <property type="entry name" value="Glutamine synthetase/guanido kinase"/>
    <property type="match status" value="1"/>
</dbReference>
<accession>Q6D1T4</accession>
<reference key="1">
    <citation type="journal article" date="2004" name="Proc. Natl. Acad. Sci. U.S.A.">
        <title>Genome sequence of the enterobacterial phytopathogen Erwinia carotovora subsp. atroseptica and characterization of virulence factors.</title>
        <authorList>
            <person name="Bell K.S."/>
            <person name="Sebaihia M."/>
            <person name="Pritchard L."/>
            <person name="Holden M.T.G."/>
            <person name="Hyman L.J."/>
            <person name="Holeva M.C."/>
            <person name="Thomson N.R."/>
            <person name="Bentley S.D."/>
            <person name="Churcher L.J.C."/>
            <person name="Mungall K."/>
            <person name="Atkin R."/>
            <person name="Bason N."/>
            <person name="Brooks K."/>
            <person name="Chillingworth T."/>
            <person name="Clark K."/>
            <person name="Doggett J."/>
            <person name="Fraser A."/>
            <person name="Hance Z."/>
            <person name="Hauser H."/>
            <person name="Jagels K."/>
            <person name="Moule S."/>
            <person name="Norbertczak H."/>
            <person name="Ormond D."/>
            <person name="Price C."/>
            <person name="Quail M.A."/>
            <person name="Sanders M."/>
            <person name="Walker D."/>
            <person name="Whitehead S."/>
            <person name="Salmond G.P.C."/>
            <person name="Birch P.R.J."/>
            <person name="Parkhill J."/>
            <person name="Toth I.K."/>
        </authorList>
    </citation>
    <scope>NUCLEOTIDE SEQUENCE [LARGE SCALE GENOMIC DNA]</scope>
    <source>
        <strain>SCRI 1043 / ATCC BAA-672</strain>
    </source>
</reference>
<gene>
    <name evidence="1" type="primary">gshA</name>
    <name type="ordered locus">ECA3363</name>
</gene>
<sequence length="517" mass="58348">MIPDISEALSWLEKHPLAVKGIQRGIERETLRVTANGDLATTGHPEILGSALAHPWITTDFAEALLEFITPVDKDVDHLLTFLRDIHRHVSRNLGDERMWPLSMPCFIDSEQNIELAQYGSSNVGRFKTLYREGLKNRYGALMQTISGVHYNFSLPLSFWQAREGVADAESGKKAISAGYFRLIRNYYRFGWVIPYLFGASPAICSSFLRGRETALPFEHTEKGMLYLPYATSLRLSDLGYTNKSQSNLGITFNDLDTYVAALKRAIKTPSEEYAQVGVKKEGRYLQLNTNVLQIENELYAPIRPKRVTRAGETPSDALLRGGIEYIEVRSLDINPFSPTGVSESQVRFLDLFLIWCALADAPEMSADELLCTRKNWNRVILEGRKPGQTVGMRCETIQQPIAEVGKSLFADLRRVAEVLDAENDQPHYQQVCDELLVGFDDPETTFSGRLLTLMKQEGNGSVGLNLAEEYRQMLSGEPLQVLTEEQLVAEGERSWQRQRQIESEDTMGFDDYLATQ</sequence>
<keyword id="KW-0067">ATP-binding</keyword>
<keyword id="KW-0317">Glutathione biosynthesis</keyword>
<keyword id="KW-0436">Ligase</keyword>
<keyword id="KW-0547">Nucleotide-binding</keyword>
<keyword id="KW-1185">Reference proteome</keyword>
<feature type="chain" id="PRO_0000192527" description="Glutamate--cysteine ligase">
    <location>
        <begin position="1"/>
        <end position="517"/>
    </location>
</feature>